<proteinExistence type="evidence at transcript level"/>
<feature type="transit peptide" description="Mitochondrion" evidence="2">
    <location>
        <begin position="1"/>
        <end position="27"/>
    </location>
</feature>
<feature type="chain" id="PRO_0000281867" description="Branched-chain-amino-acid aminotransferase, mitochondrial">
    <location>
        <begin position="28"/>
        <end position="392"/>
    </location>
</feature>
<feature type="binding site" evidence="1">
    <location>
        <position position="168"/>
    </location>
    <ligand>
        <name>substrate</name>
    </ligand>
</feature>
<feature type="modified residue" description="N6-(pyridoxal phosphate)lysine" evidence="1">
    <location>
        <position position="229"/>
    </location>
</feature>
<feature type="modified residue" description="N6-acetyllysine" evidence="1">
    <location>
        <position position="321"/>
    </location>
</feature>
<accession>Q5REP0</accession>
<evidence type="ECO:0000250" key="1">
    <source>
        <dbReference type="UniProtKB" id="O15382"/>
    </source>
</evidence>
<evidence type="ECO:0000250" key="2">
    <source>
        <dbReference type="UniProtKB" id="O35854"/>
    </source>
</evidence>
<evidence type="ECO:0000305" key="3"/>
<protein>
    <recommendedName>
        <fullName>Branched-chain-amino-acid aminotransferase, mitochondrial</fullName>
        <shortName>BCAT(m)</shortName>
        <ecNumber evidence="1">2.6.1.42</ecNumber>
    </recommendedName>
</protein>
<name>BCAT2_PONAB</name>
<gene>
    <name type="primary">BCAT2</name>
</gene>
<organism>
    <name type="scientific">Pongo abelii</name>
    <name type="common">Sumatran orangutan</name>
    <name type="synonym">Pongo pygmaeus abelii</name>
    <dbReference type="NCBI Taxonomy" id="9601"/>
    <lineage>
        <taxon>Eukaryota</taxon>
        <taxon>Metazoa</taxon>
        <taxon>Chordata</taxon>
        <taxon>Craniata</taxon>
        <taxon>Vertebrata</taxon>
        <taxon>Euteleostomi</taxon>
        <taxon>Mammalia</taxon>
        <taxon>Eutheria</taxon>
        <taxon>Euarchontoglires</taxon>
        <taxon>Primates</taxon>
        <taxon>Haplorrhini</taxon>
        <taxon>Catarrhini</taxon>
        <taxon>Hominidae</taxon>
        <taxon>Pongo</taxon>
    </lineage>
</organism>
<sequence length="392" mass="44221">MAAAALGQIWARKFLSVPWLLCGPRRYASSSFKAADLQLEMTQKPHKKPGPGEPLVFGKTFTDHMLMVEWSDKGWGQPRIQPFQNLTLHPASSSLHYSLQLFEGMKAFKGKDQQVRLFRPWLNMDRMLRSAMRLCLPSFDKLELLECIRRLIEVDKDWVPDAAGTSLYVRPVLIGNEPSLGVSQPTRALLFVILCPVGTYFPGGSVTPVSLLADPAFIRAWVGGVGNYKLGGNYGPTVLVQQEALKQGCEQVLWLYGPDHQLTEVGTMNIFVYWTHEDGVLELVTPPLNGVILPGVVRQSLLDLAQTWGEFRVVERTITTKQLLQALEEGRVREVFGSGTACQVCPVHRILYKDRNLHIPTMENGPELILRFQKELKEIQYGIRAHEWMFPV</sequence>
<dbReference type="EC" id="2.6.1.42" evidence="1"/>
<dbReference type="EMBL" id="CR857482">
    <property type="protein sequence ID" value="CAH89767.1"/>
    <property type="molecule type" value="mRNA"/>
</dbReference>
<dbReference type="RefSeq" id="NP_001124808.1">
    <property type="nucleotide sequence ID" value="NM_001131336.1"/>
</dbReference>
<dbReference type="SMR" id="Q5REP0"/>
<dbReference type="FunCoup" id="Q5REP0">
    <property type="interactions" value="1545"/>
</dbReference>
<dbReference type="STRING" id="9601.ENSPPYP00000011426"/>
<dbReference type="GeneID" id="100171664"/>
<dbReference type="KEGG" id="pon:100171664"/>
<dbReference type="CTD" id="587"/>
<dbReference type="eggNOG" id="KOG0975">
    <property type="taxonomic scope" value="Eukaryota"/>
</dbReference>
<dbReference type="InParanoid" id="Q5REP0"/>
<dbReference type="OrthoDB" id="1732691at2759"/>
<dbReference type="Proteomes" id="UP000001595">
    <property type="component" value="Unplaced"/>
</dbReference>
<dbReference type="GO" id="GO:0005739">
    <property type="term" value="C:mitochondrion"/>
    <property type="evidence" value="ECO:0007669"/>
    <property type="project" value="UniProtKB-SubCell"/>
</dbReference>
<dbReference type="GO" id="GO:0052656">
    <property type="term" value="F:L-isoleucine-2-oxoglutarate transaminase activity"/>
    <property type="evidence" value="ECO:0007669"/>
    <property type="project" value="RHEA"/>
</dbReference>
<dbReference type="GO" id="GO:0052654">
    <property type="term" value="F:L-leucine-2-oxoglutarate transaminase activity"/>
    <property type="evidence" value="ECO:0007669"/>
    <property type="project" value="RHEA"/>
</dbReference>
<dbReference type="GO" id="GO:0052655">
    <property type="term" value="F:L-valine-2-oxoglutarate transaminase activity"/>
    <property type="evidence" value="ECO:0007669"/>
    <property type="project" value="RHEA"/>
</dbReference>
<dbReference type="GO" id="GO:0009098">
    <property type="term" value="P:L-leucine biosynthetic process"/>
    <property type="evidence" value="ECO:0007669"/>
    <property type="project" value="TreeGrafter"/>
</dbReference>
<dbReference type="GO" id="GO:0009099">
    <property type="term" value="P:L-valine biosynthetic process"/>
    <property type="evidence" value="ECO:0007669"/>
    <property type="project" value="TreeGrafter"/>
</dbReference>
<dbReference type="GO" id="GO:0006629">
    <property type="term" value="P:lipid metabolic process"/>
    <property type="evidence" value="ECO:0007669"/>
    <property type="project" value="UniProtKB-KW"/>
</dbReference>
<dbReference type="CDD" id="cd01557">
    <property type="entry name" value="BCAT_beta_family"/>
    <property type="match status" value="1"/>
</dbReference>
<dbReference type="FunFam" id="3.30.470.10:FF:000002">
    <property type="entry name" value="Branched-chain-amino-acid aminotransferase"/>
    <property type="match status" value="1"/>
</dbReference>
<dbReference type="FunFam" id="3.20.10.10:FF:000007">
    <property type="entry name" value="Branched-chain-amino-acid aminotransferase, mitochondrial"/>
    <property type="match status" value="1"/>
</dbReference>
<dbReference type="Gene3D" id="3.30.470.10">
    <property type="match status" value="1"/>
</dbReference>
<dbReference type="Gene3D" id="3.20.10.10">
    <property type="entry name" value="D-amino Acid Aminotransferase, subunit A, domain 2"/>
    <property type="match status" value="1"/>
</dbReference>
<dbReference type="InterPro" id="IPR001544">
    <property type="entry name" value="Aminotrans_IV"/>
</dbReference>
<dbReference type="InterPro" id="IPR018300">
    <property type="entry name" value="Aminotrans_IV_CS"/>
</dbReference>
<dbReference type="InterPro" id="IPR036038">
    <property type="entry name" value="Aminotransferase-like"/>
</dbReference>
<dbReference type="InterPro" id="IPR005786">
    <property type="entry name" value="B_amino_transII"/>
</dbReference>
<dbReference type="InterPro" id="IPR043132">
    <property type="entry name" value="BCAT-like_C"/>
</dbReference>
<dbReference type="InterPro" id="IPR043131">
    <property type="entry name" value="BCAT-like_N"/>
</dbReference>
<dbReference type="InterPro" id="IPR033939">
    <property type="entry name" value="BCAT_family"/>
</dbReference>
<dbReference type="NCBIfam" id="TIGR01123">
    <property type="entry name" value="ilvE_II"/>
    <property type="match status" value="1"/>
</dbReference>
<dbReference type="NCBIfam" id="NF009897">
    <property type="entry name" value="PRK13357.1"/>
    <property type="match status" value="1"/>
</dbReference>
<dbReference type="PANTHER" id="PTHR11825:SF39">
    <property type="entry name" value="BRANCHED-CHAIN-AMINO-ACID AMINOTRANSFERASE, MITOCHONDRIAL"/>
    <property type="match status" value="1"/>
</dbReference>
<dbReference type="PANTHER" id="PTHR11825">
    <property type="entry name" value="SUBGROUP IIII AMINOTRANSFERASE"/>
    <property type="match status" value="1"/>
</dbReference>
<dbReference type="Pfam" id="PF01063">
    <property type="entry name" value="Aminotran_4"/>
    <property type="match status" value="1"/>
</dbReference>
<dbReference type="PIRSF" id="PIRSF006468">
    <property type="entry name" value="BCAT1"/>
    <property type="match status" value="1"/>
</dbReference>
<dbReference type="SUPFAM" id="SSF56752">
    <property type="entry name" value="D-aminoacid aminotransferase-like PLP-dependent enzymes"/>
    <property type="match status" value="1"/>
</dbReference>
<dbReference type="PROSITE" id="PS00770">
    <property type="entry name" value="AA_TRANSFER_CLASS_4"/>
    <property type="match status" value="1"/>
</dbReference>
<keyword id="KW-0007">Acetylation</keyword>
<keyword id="KW-0028">Amino-acid biosynthesis</keyword>
<keyword id="KW-0032">Aminotransferase</keyword>
<keyword id="KW-0100">Branched-chain amino acid biosynthesis</keyword>
<keyword id="KW-0443">Lipid metabolism</keyword>
<keyword id="KW-0496">Mitochondrion</keyword>
<keyword id="KW-0663">Pyridoxal phosphate</keyword>
<keyword id="KW-1185">Reference proteome</keyword>
<keyword id="KW-0808">Transferase</keyword>
<keyword id="KW-0809">Transit peptide</keyword>
<reference key="1">
    <citation type="submission" date="2004-11" db="EMBL/GenBank/DDBJ databases">
        <authorList>
            <consortium name="The German cDNA consortium"/>
        </authorList>
    </citation>
    <scope>NUCLEOTIDE SEQUENCE [LARGE SCALE MRNA]</scope>
    <source>
        <tissue>Heart</tissue>
    </source>
</reference>
<comment type="function">
    <text evidence="1 2">Catalyzes the first reaction in the catabolism of the essential branched chain amino acids leucine, isoleucine, and valine (By similarity). May also function as a transporter of branched chain alpha-keto acids (By similarity).</text>
</comment>
<comment type="catalytic activity">
    <reaction evidence="1">
        <text>L-leucine + 2-oxoglutarate = 4-methyl-2-oxopentanoate + L-glutamate</text>
        <dbReference type="Rhea" id="RHEA:18321"/>
        <dbReference type="ChEBI" id="CHEBI:16810"/>
        <dbReference type="ChEBI" id="CHEBI:17865"/>
        <dbReference type="ChEBI" id="CHEBI:29985"/>
        <dbReference type="ChEBI" id="CHEBI:57427"/>
        <dbReference type="EC" id="2.6.1.42"/>
    </reaction>
</comment>
<comment type="catalytic activity">
    <reaction evidence="1">
        <text>L-isoleucine + 2-oxoglutarate = (S)-3-methyl-2-oxopentanoate + L-glutamate</text>
        <dbReference type="Rhea" id="RHEA:24801"/>
        <dbReference type="ChEBI" id="CHEBI:16810"/>
        <dbReference type="ChEBI" id="CHEBI:29985"/>
        <dbReference type="ChEBI" id="CHEBI:35146"/>
        <dbReference type="ChEBI" id="CHEBI:58045"/>
        <dbReference type="EC" id="2.6.1.42"/>
    </reaction>
</comment>
<comment type="catalytic activity">
    <reaction evidence="1">
        <text>L-valine + 2-oxoglutarate = 3-methyl-2-oxobutanoate + L-glutamate</text>
        <dbReference type="Rhea" id="RHEA:24813"/>
        <dbReference type="ChEBI" id="CHEBI:11851"/>
        <dbReference type="ChEBI" id="CHEBI:16810"/>
        <dbReference type="ChEBI" id="CHEBI:29985"/>
        <dbReference type="ChEBI" id="CHEBI:57762"/>
        <dbReference type="EC" id="2.6.1.42"/>
    </reaction>
</comment>
<comment type="cofactor">
    <cofactor evidence="1">
        <name>pyridoxal 5'-phosphate</name>
        <dbReference type="ChEBI" id="CHEBI:597326"/>
    </cofactor>
</comment>
<comment type="subunit">
    <text evidence="1">Homodimer.</text>
</comment>
<comment type="subcellular location">
    <subcellularLocation>
        <location evidence="2">Mitochondrion</location>
    </subcellularLocation>
</comment>
<comment type="similarity">
    <text evidence="3">Belongs to the class-IV pyridoxal-phosphate-dependent aminotransferase family.</text>
</comment>